<protein>
    <recommendedName>
        <fullName evidence="1">Foldase protein PrsA</fullName>
        <ecNumber evidence="1">5.2.1.8</ecNumber>
    </recommendedName>
</protein>
<organism>
    <name type="scientific">Streptococcus mutans serotype c (strain ATCC 700610 / UA159)</name>
    <dbReference type="NCBI Taxonomy" id="210007"/>
    <lineage>
        <taxon>Bacteria</taxon>
        <taxon>Bacillati</taxon>
        <taxon>Bacillota</taxon>
        <taxon>Bacilli</taxon>
        <taxon>Lactobacillales</taxon>
        <taxon>Streptococcaceae</taxon>
        <taxon>Streptococcus</taxon>
    </lineage>
</organism>
<feature type="signal peptide" evidence="1">
    <location>
        <begin position="1"/>
        <end position="21"/>
    </location>
</feature>
<feature type="chain" id="PRO_0000029326" description="Foldase protein PrsA">
    <location>
        <begin position="22"/>
        <end position="333"/>
    </location>
</feature>
<feature type="domain" description="PpiC" evidence="1">
    <location>
        <begin position="144"/>
        <end position="237"/>
    </location>
</feature>
<feature type="region of interest" description="Disordered" evidence="2">
    <location>
        <begin position="296"/>
        <end position="333"/>
    </location>
</feature>
<feature type="lipid moiety-binding region" description="N-palmitoyl cysteine" evidence="1">
    <location>
        <position position="22"/>
    </location>
</feature>
<feature type="lipid moiety-binding region" description="S-diacylglycerol cysteine" evidence="1">
    <location>
        <position position="22"/>
    </location>
</feature>
<feature type="strand" evidence="3">
    <location>
        <begin position="30"/>
        <end position="33"/>
    </location>
</feature>
<feature type="helix" evidence="3">
    <location>
        <begin position="41"/>
        <end position="48"/>
    </location>
</feature>
<feature type="helix" evidence="3">
    <location>
        <begin position="52"/>
        <end position="70"/>
    </location>
</feature>
<feature type="turn" evidence="3">
    <location>
        <begin position="72"/>
        <end position="74"/>
    </location>
</feature>
<feature type="helix" evidence="3">
    <location>
        <begin position="77"/>
        <end position="91"/>
    </location>
</feature>
<feature type="helix" evidence="3">
    <location>
        <begin position="92"/>
        <end position="94"/>
    </location>
</feature>
<feature type="helix" evidence="3">
    <location>
        <begin position="95"/>
        <end position="101"/>
    </location>
</feature>
<feature type="helix" evidence="3">
    <location>
        <begin position="106"/>
        <end position="126"/>
    </location>
</feature>
<feature type="turn" evidence="3">
    <location>
        <begin position="127"/>
        <end position="129"/>
    </location>
</feature>
<feature type="helix" evidence="3">
    <location>
        <begin position="133"/>
        <end position="138"/>
    </location>
</feature>
<feature type="turn" evidence="3">
    <location>
        <begin position="139"/>
        <end position="142"/>
    </location>
</feature>
<feature type="strand" evidence="3">
    <location>
        <begin position="147"/>
        <end position="155"/>
    </location>
</feature>
<feature type="helix" evidence="3">
    <location>
        <begin position="157"/>
        <end position="167"/>
    </location>
</feature>
<feature type="strand" evidence="3">
    <location>
        <begin position="169"/>
        <end position="171"/>
    </location>
</feature>
<feature type="helix" evidence="3">
    <location>
        <begin position="174"/>
        <end position="179"/>
    </location>
</feature>
<feature type="strand" evidence="3">
    <location>
        <begin position="187"/>
        <end position="191"/>
    </location>
</feature>
<feature type="strand" evidence="3">
    <location>
        <begin position="196"/>
        <end position="198"/>
    </location>
</feature>
<feature type="helix" evidence="3">
    <location>
        <begin position="200"/>
        <end position="207"/>
    </location>
</feature>
<feature type="strand" evidence="3">
    <location>
        <begin position="218"/>
        <end position="220"/>
    </location>
</feature>
<feature type="turn" evidence="3">
    <location>
        <begin position="223"/>
        <end position="225"/>
    </location>
</feature>
<feature type="strand" evidence="3">
    <location>
        <begin position="229"/>
        <end position="238"/>
    </location>
</feature>
<feature type="helix" evidence="3">
    <location>
        <begin position="245"/>
        <end position="248"/>
    </location>
</feature>
<feature type="helix" evidence="3">
    <location>
        <begin position="249"/>
        <end position="260"/>
    </location>
</feature>
<feature type="helix" evidence="3">
    <location>
        <begin position="264"/>
        <end position="277"/>
    </location>
</feature>
<feature type="helix" evidence="3">
    <location>
        <begin position="285"/>
        <end position="291"/>
    </location>
</feature>
<reference key="1">
    <citation type="journal article" date="2002" name="Proc. Natl. Acad. Sci. U.S.A.">
        <title>Genome sequence of Streptococcus mutans UA159, a cariogenic dental pathogen.</title>
        <authorList>
            <person name="Ajdic D.J."/>
            <person name="McShan W.M."/>
            <person name="McLaughlin R.E."/>
            <person name="Savic G."/>
            <person name="Chang J."/>
            <person name="Carson M.B."/>
            <person name="Primeaux C."/>
            <person name="Tian R."/>
            <person name="Kenton S."/>
            <person name="Jia H.G."/>
            <person name="Lin S.P."/>
            <person name="Qian Y."/>
            <person name="Li S."/>
            <person name="Zhu H."/>
            <person name="Najar F.Z."/>
            <person name="Lai H."/>
            <person name="White J."/>
            <person name="Roe B.A."/>
            <person name="Ferretti J.J."/>
        </authorList>
    </citation>
    <scope>NUCLEOTIDE SEQUENCE [LARGE SCALE GENOMIC DNA]</scope>
    <source>
        <strain>ATCC 700610 / UA159</strain>
    </source>
</reference>
<accession>Q8CVC6</accession>
<proteinExistence type="evidence at protein level"/>
<name>PRSA_STRMU</name>
<evidence type="ECO:0000255" key="1">
    <source>
        <dbReference type="HAMAP-Rule" id="MF_01145"/>
    </source>
</evidence>
<evidence type="ECO:0000256" key="2">
    <source>
        <dbReference type="SAM" id="MobiDB-lite"/>
    </source>
</evidence>
<evidence type="ECO:0007829" key="3">
    <source>
        <dbReference type="PDB" id="7L75"/>
    </source>
</evidence>
<comment type="function">
    <text evidence="1">Plays a major role in protein secretion by helping the post-translocational extracellular folding of several secreted proteins.</text>
</comment>
<comment type="catalytic activity">
    <reaction evidence="1">
        <text>[protein]-peptidylproline (omega=180) = [protein]-peptidylproline (omega=0)</text>
        <dbReference type="Rhea" id="RHEA:16237"/>
        <dbReference type="Rhea" id="RHEA-COMP:10747"/>
        <dbReference type="Rhea" id="RHEA-COMP:10748"/>
        <dbReference type="ChEBI" id="CHEBI:83833"/>
        <dbReference type="ChEBI" id="CHEBI:83834"/>
        <dbReference type="EC" id="5.2.1.8"/>
    </reaction>
</comment>
<comment type="subcellular location">
    <subcellularLocation>
        <location evidence="1">Cell membrane</location>
        <topology evidence="1">Lipid-anchor</topology>
    </subcellularLocation>
</comment>
<comment type="similarity">
    <text evidence="1">Belongs to the PrsA family.</text>
</comment>
<sequence length="333" mass="36093">MKKRTIATGLVTLLSIVTLAACSKTNQNSKIATMKGDTITVADFYNEVKNSTASKQAVLSLLVSKVFEKQYGDKVSDKEVTKAYNEAAKYYGDSFSSALASRGYTKEDYKKQIRSEKLIEYAVKEEAKKEITDASYKSAYKDYKPEVTAQVIQLDSEDKAKSVLEEAKADGADFAKIAKDNTKGDKTEYSFDSGSTNLPSQVLSAALNLDKDGVSDVIKASDSTTYKPVYYIVKITKKTDKNADWKAYKKRLKEIIVSQKLNDSNFRNAVIGKAFKKANVKIKDKAFSEILSQYAAASGSGSSGSTTTTTAASSAATTAADDQTTAAETTAAE</sequence>
<gene>
    <name evidence="1" type="primary">prsA</name>
    <name type="ordered locus">SMU_648</name>
</gene>
<keyword id="KW-0002">3D-structure</keyword>
<keyword id="KW-1003">Cell membrane</keyword>
<keyword id="KW-0413">Isomerase</keyword>
<keyword id="KW-0449">Lipoprotein</keyword>
<keyword id="KW-0472">Membrane</keyword>
<keyword id="KW-0564">Palmitate</keyword>
<keyword id="KW-1185">Reference proteome</keyword>
<keyword id="KW-0697">Rotamase</keyword>
<keyword id="KW-0732">Signal</keyword>
<dbReference type="EC" id="5.2.1.8" evidence="1"/>
<dbReference type="EMBL" id="AE014133">
    <property type="protein sequence ID" value="AAN58382.1"/>
    <property type="molecule type" value="Genomic_DNA"/>
</dbReference>
<dbReference type="RefSeq" id="NP_721076.1">
    <property type="nucleotide sequence ID" value="NC_004350.2"/>
</dbReference>
<dbReference type="RefSeq" id="WP_002261893.1">
    <property type="nucleotide sequence ID" value="NC_004350.2"/>
</dbReference>
<dbReference type="PDB" id="7L75">
    <property type="method" value="X-ray"/>
    <property type="resolution" value="3.15 A"/>
    <property type="chains" value="A/B=20-294"/>
</dbReference>
<dbReference type="PDBsum" id="7L75"/>
<dbReference type="SMR" id="Q8CVC6"/>
<dbReference type="STRING" id="210007.SMU_648"/>
<dbReference type="GeneID" id="93859794"/>
<dbReference type="KEGG" id="smu:SMU_648"/>
<dbReference type="PATRIC" id="fig|210007.7.peg.574"/>
<dbReference type="eggNOG" id="COG0760">
    <property type="taxonomic scope" value="Bacteria"/>
</dbReference>
<dbReference type="HOGENOM" id="CLU_034646_6_0_9"/>
<dbReference type="OrthoDB" id="2194386at2"/>
<dbReference type="PhylomeDB" id="Q8CVC6"/>
<dbReference type="Proteomes" id="UP000002512">
    <property type="component" value="Chromosome"/>
</dbReference>
<dbReference type="GO" id="GO:0005886">
    <property type="term" value="C:plasma membrane"/>
    <property type="evidence" value="ECO:0007669"/>
    <property type="project" value="UniProtKB-SubCell"/>
</dbReference>
<dbReference type="GO" id="GO:0003755">
    <property type="term" value="F:peptidyl-prolyl cis-trans isomerase activity"/>
    <property type="evidence" value="ECO:0007669"/>
    <property type="project" value="UniProtKB-UniRule"/>
</dbReference>
<dbReference type="GO" id="GO:0006457">
    <property type="term" value="P:protein folding"/>
    <property type="evidence" value="ECO:0007669"/>
    <property type="project" value="UniProtKB-UniRule"/>
</dbReference>
<dbReference type="Gene3D" id="1.10.4030.10">
    <property type="entry name" value="Porin chaperone SurA, peptide-binding domain"/>
    <property type="match status" value="1"/>
</dbReference>
<dbReference type="HAMAP" id="MF_01145">
    <property type="entry name" value="Foldase_PrsA"/>
    <property type="match status" value="1"/>
</dbReference>
<dbReference type="InterPro" id="IPR023059">
    <property type="entry name" value="Foldase_PrsA"/>
</dbReference>
<dbReference type="InterPro" id="IPR000297">
    <property type="entry name" value="PPIase_PpiC"/>
</dbReference>
<dbReference type="InterPro" id="IPR050245">
    <property type="entry name" value="PrsA_foldase"/>
</dbReference>
<dbReference type="InterPro" id="IPR027304">
    <property type="entry name" value="Trigger_fact/SurA_dom_sf"/>
</dbReference>
<dbReference type="NCBIfam" id="NF002361">
    <property type="entry name" value="PRK01326.1"/>
    <property type="match status" value="1"/>
</dbReference>
<dbReference type="PANTHER" id="PTHR47245:SF1">
    <property type="entry name" value="FOLDASE PROTEIN PRSA"/>
    <property type="match status" value="1"/>
</dbReference>
<dbReference type="PANTHER" id="PTHR47245">
    <property type="entry name" value="PEPTIDYLPROLYL ISOMERASE"/>
    <property type="match status" value="1"/>
</dbReference>
<dbReference type="Pfam" id="PF13145">
    <property type="entry name" value="Rotamase_2"/>
    <property type="match status" value="1"/>
</dbReference>
<dbReference type="SUPFAM" id="SSF54534">
    <property type="entry name" value="FKBP-like"/>
    <property type="match status" value="1"/>
</dbReference>
<dbReference type="SUPFAM" id="SSF109998">
    <property type="entry name" value="Triger factor/SurA peptide-binding domain-like"/>
    <property type="match status" value="1"/>
</dbReference>
<dbReference type="PROSITE" id="PS51257">
    <property type="entry name" value="PROKAR_LIPOPROTEIN"/>
    <property type="match status" value="1"/>
</dbReference>